<dbReference type="EMBL" id="CH408031">
    <property type="protein sequence ID" value="EAQ89358.1"/>
    <property type="molecule type" value="Genomic_DNA"/>
</dbReference>
<dbReference type="RefSeq" id="XP_001222072.1">
    <property type="nucleotide sequence ID" value="XM_001222071.1"/>
</dbReference>
<dbReference type="SMR" id="Q2H5T8"/>
<dbReference type="STRING" id="306901.Q2H5T8"/>
<dbReference type="GeneID" id="4391386"/>
<dbReference type="VEuPathDB" id="FungiDB:CHGG_05977"/>
<dbReference type="eggNOG" id="KOG2479">
    <property type="taxonomic scope" value="Eukaryota"/>
</dbReference>
<dbReference type="HOGENOM" id="CLU_024521_2_0_1"/>
<dbReference type="InParanoid" id="Q2H5T8"/>
<dbReference type="OMA" id="FMDKRDN"/>
<dbReference type="OrthoDB" id="16538at2759"/>
<dbReference type="Proteomes" id="UP000001056">
    <property type="component" value="Unassembled WGS sequence"/>
</dbReference>
<dbReference type="GO" id="GO:0005829">
    <property type="term" value="C:cytosol"/>
    <property type="evidence" value="ECO:0007669"/>
    <property type="project" value="EnsemblFungi"/>
</dbReference>
<dbReference type="GO" id="GO:0016282">
    <property type="term" value="C:eukaryotic 43S preinitiation complex"/>
    <property type="evidence" value="ECO:0007669"/>
    <property type="project" value="UniProtKB-UniRule"/>
</dbReference>
<dbReference type="GO" id="GO:0033290">
    <property type="term" value="C:eukaryotic 48S preinitiation complex"/>
    <property type="evidence" value="ECO:0007669"/>
    <property type="project" value="UniProtKB-UniRule"/>
</dbReference>
<dbReference type="GO" id="GO:0071540">
    <property type="term" value="C:eukaryotic translation initiation factor 3 complex, eIF3e"/>
    <property type="evidence" value="ECO:0007669"/>
    <property type="project" value="EnsemblFungi"/>
</dbReference>
<dbReference type="GO" id="GO:0071541">
    <property type="term" value="C:eukaryotic translation initiation factor 3 complex, eIF3m"/>
    <property type="evidence" value="ECO:0007669"/>
    <property type="project" value="EnsemblFungi"/>
</dbReference>
<dbReference type="GO" id="GO:0098808">
    <property type="term" value="F:mRNA cap binding"/>
    <property type="evidence" value="ECO:0007669"/>
    <property type="project" value="UniProtKB-UniRule"/>
</dbReference>
<dbReference type="GO" id="GO:0003743">
    <property type="term" value="F:translation initiation factor activity"/>
    <property type="evidence" value="ECO:0007669"/>
    <property type="project" value="UniProtKB-UniRule"/>
</dbReference>
<dbReference type="GO" id="GO:0002191">
    <property type="term" value="P:cap-dependent translational initiation"/>
    <property type="evidence" value="ECO:0007669"/>
    <property type="project" value="UniProtKB-UniRule"/>
</dbReference>
<dbReference type="GO" id="GO:0001732">
    <property type="term" value="P:formation of cytoplasmic translation initiation complex"/>
    <property type="evidence" value="ECO:0007669"/>
    <property type="project" value="UniProtKB-UniRule"/>
</dbReference>
<dbReference type="HAMAP" id="MF_03003">
    <property type="entry name" value="eIF3d"/>
    <property type="match status" value="1"/>
</dbReference>
<dbReference type="InterPro" id="IPR007783">
    <property type="entry name" value="eIF3d"/>
</dbReference>
<dbReference type="PANTHER" id="PTHR12399">
    <property type="entry name" value="EUKARYOTIC TRANSLATION INITIATION FACTOR 3 SUBUNIT 7"/>
    <property type="match status" value="1"/>
</dbReference>
<dbReference type="PANTHER" id="PTHR12399:SF0">
    <property type="entry name" value="EUKARYOTIC TRANSLATION INITIATION FACTOR 3 SUBUNIT D"/>
    <property type="match status" value="1"/>
</dbReference>
<dbReference type="Pfam" id="PF05091">
    <property type="entry name" value="eIF-3_zeta"/>
    <property type="match status" value="1"/>
</dbReference>
<dbReference type="PIRSF" id="PIRSF016281">
    <property type="entry name" value="EIF-3_zeta"/>
    <property type="match status" value="1"/>
</dbReference>
<organism>
    <name type="scientific">Chaetomium globosum (strain ATCC 6205 / CBS 148.51 / DSM 1962 / NBRC 6347 / NRRL 1970)</name>
    <name type="common">Soil fungus</name>
    <dbReference type="NCBI Taxonomy" id="306901"/>
    <lineage>
        <taxon>Eukaryota</taxon>
        <taxon>Fungi</taxon>
        <taxon>Dikarya</taxon>
        <taxon>Ascomycota</taxon>
        <taxon>Pezizomycotina</taxon>
        <taxon>Sordariomycetes</taxon>
        <taxon>Sordariomycetidae</taxon>
        <taxon>Sordariales</taxon>
        <taxon>Chaetomiaceae</taxon>
        <taxon>Chaetomium</taxon>
    </lineage>
</organism>
<sequence>MAEYTAGTSPLVDLINSLPDSDGTWGPPITNETTLNGVPYAPFSKSDKLGRMADWTDAKDGRDGRGRQQYNRNYRDQQVYGAGSASLFAPPAAEDEASFSVVSNVRDTGKTRFGRGAIFTRGRGQRGRGGQDTRGGGRQQFQRGGRGGQQYGGGGYSDRGGGRGGGARGRRFGWKDYDKPQRNRDASVNIRPDWKLLEEIDYNRLSKLNLDTDEGEDVDSYGFLYYYDRSYDKPPVKSAERKLAVVDRAVYNVTTSSDPIIQELAEKDEATIFATDSILSMLMCAPRSMYPWDIIIVRQGNKVFLDKRDNAALDMVTVNENAADAPLEASEGSKDVINQPGALAEEATYINHNFVNQVVLESSNQKVDMANENPFHSASEETEPPASKAYKYRRFDLSTSEETPTYLVVRTELDAVQKNPTSGEDQFVTVHALNEFDSKAQGSGGALDWRTKLVSQRGAVVATEMKNNSCKLARWTVQSILAKADVMKLGFVSRVTPKANDKHVILGCVGWKPKDFANQMNLQLSNGWGIVRTIADMCLQREEGKYVLVKDPNKNILRLYEVPANGLDDDDEGPEPEGVAEEED</sequence>
<name>EIF3D_CHAGB</name>
<feature type="chain" id="PRO_0000364172" description="Eukaryotic translation initiation factor 3 subunit D">
    <location>
        <begin position="1"/>
        <end position="584"/>
    </location>
</feature>
<feature type="region of interest" description="Disordered" evidence="3">
    <location>
        <begin position="118"/>
        <end position="184"/>
    </location>
</feature>
<feature type="region of interest" description="RNA gate" evidence="1">
    <location>
        <begin position="312"/>
        <end position="326"/>
    </location>
</feature>
<feature type="region of interest" description="Disordered" evidence="3">
    <location>
        <begin position="563"/>
        <end position="584"/>
    </location>
</feature>
<feature type="compositionally biased region" description="Gly residues" evidence="3">
    <location>
        <begin position="127"/>
        <end position="167"/>
    </location>
</feature>
<feature type="compositionally biased region" description="Basic and acidic residues" evidence="3">
    <location>
        <begin position="173"/>
        <end position="184"/>
    </location>
</feature>
<feature type="compositionally biased region" description="Acidic residues" evidence="3">
    <location>
        <begin position="567"/>
        <end position="584"/>
    </location>
</feature>
<comment type="function">
    <text evidence="2">mRNA cap-binding component of the eukaryotic translation initiation factor 3 (eIF-3) complex, which is involved in protein synthesis of a specialized repertoire of mRNAs and, together with other initiation factors, stimulates binding of mRNA and methionyl-tRNAi to the 40S ribosome. The eIF-3 complex specifically targets and initiates translation of a subset of mRNAs involved in cell proliferation. In the eIF-3 complex, eif3d specifically recognizes and binds the 7-methylguanosine cap of a subset of mRNAs.</text>
</comment>
<comment type="subunit">
    <text evidence="2">Component of the eukaryotic translation initiation factor 3 (eIF-3) complex.</text>
</comment>
<comment type="subcellular location">
    <subcellularLocation>
        <location evidence="2">Cytoplasm</location>
    </subcellularLocation>
</comment>
<comment type="domain">
    <text evidence="2">The RNA gate region regulates mRNA cap recognition to prevent promiscuous mRNA-binding before assembly of eif3d into the full eukaryotic translation initiation factor 3 (eIF-3) complex.</text>
</comment>
<comment type="similarity">
    <text evidence="2">Belongs to the eIF-3 subunit D family.</text>
</comment>
<reference key="1">
    <citation type="journal article" date="2015" name="Genome Announc.">
        <title>Draft genome sequence of the cellulolytic fungus Chaetomium globosum.</title>
        <authorList>
            <person name="Cuomo C.A."/>
            <person name="Untereiner W.A."/>
            <person name="Ma L.-J."/>
            <person name="Grabherr M."/>
            <person name="Birren B.W."/>
        </authorList>
    </citation>
    <scope>NUCLEOTIDE SEQUENCE [LARGE SCALE GENOMIC DNA]</scope>
    <source>
        <strain>ATCC 6205 / CBS 148.51 / DSM 1962 / NBRC 6347 / NRRL 1970</strain>
    </source>
</reference>
<proteinExistence type="inferred from homology"/>
<keyword id="KW-0963">Cytoplasm</keyword>
<keyword id="KW-0396">Initiation factor</keyword>
<keyword id="KW-0648">Protein biosynthesis</keyword>
<keyword id="KW-1185">Reference proteome</keyword>
<keyword id="KW-0694">RNA-binding</keyword>
<gene>
    <name type="ORF">CHGG_05977</name>
</gene>
<accession>Q2H5T8</accession>
<protein>
    <recommendedName>
        <fullName evidence="2">Eukaryotic translation initiation factor 3 subunit D</fullName>
        <shortName evidence="2">eIF3d</shortName>
    </recommendedName>
</protein>
<evidence type="ECO:0000250" key="1">
    <source>
        <dbReference type="UniProtKB" id="K7IM66"/>
    </source>
</evidence>
<evidence type="ECO:0000255" key="2">
    <source>
        <dbReference type="HAMAP-Rule" id="MF_03003"/>
    </source>
</evidence>
<evidence type="ECO:0000256" key="3">
    <source>
        <dbReference type="SAM" id="MobiDB-lite"/>
    </source>
</evidence>